<proteinExistence type="inferred from homology"/>
<feature type="chain" id="PRO_1000141173" description="Nitric oxide reductase FlRd-NAD(+) reductase">
    <location>
        <begin position="1"/>
        <end position="377"/>
    </location>
</feature>
<reference key="1">
    <citation type="journal article" date="2008" name="J. Bacteriol.">
        <title>Insights into the environmental resistance gene pool from the genome sequence of the multidrug-resistant environmental isolate Escherichia coli SMS-3-5.</title>
        <authorList>
            <person name="Fricke W.F."/>
            <person name="Wright M.S."/>
            <person name="Lindell A.H."/>
            <person name="Harkins D.M."/>
            <person name="Baker-Austin C."/>
            <person name="Ravel J."/>
            <person name="Stepanauskas R."/>
        </authorList>
    </citation>
    <scope>NUCLEOTIDE SEQUENCE [LARGE SCALE GENOMIC DNA]</scope>
    <source>
        <strain>SMS-3-5 / SECEC</strain>
    </source>
</reference>
<protein>
    <recommendedName>
        <fullName evidence="1">Nitric oxide reductase FlRd-NAD(+) reductase</fullName>
        <ecNumber evidence="1">1.18.1.-</ecNumber>
    </recommendedName>
    <alternativeName>
        <fullName evidence="1">Flavorubredoxin reductase</fullName>
        <shortName evidence="1">FlRd-reductase</shortName>
        <shortName evidence="1">FlavoRb reductase</shortName>
    </alternativeName>
</protein>
<evidence type="ECO:0000255" key="1">
    <source>
        <dbReference type="HAMAP-Rule" id="MF_01313"/>
    </source>
</evidence>
<name>NORW_ECOSM</name>
<gene>
    <name evidence="1" type="primary">norW</name>
    <name evidence="1" type="synonym">flrR</name>
    <name type="ordered locus">EcSMS35_2834</name>
</gene>
<dbReference type="EC" id="1.18.1.-" evidence="1"/>
<dbReference type="EMBL" id="CP000970">
    <property type="protein sequence ID" value="ACB17542.1"/>
    <property type="molecule type" value="Genomic_DNA"/>
</dbReference>
<dbReference type="RefSeq" id="WP_000071563.1">
    <property type="nucleotide sequence ID" value="NC_010498.1"/>
</dbReference>
<dbReference type="SMR" id="B1LQ29"/>
<dbReference type="KEGG" id="ecm:EcSMS35_2834"/>
<dbReference type="HOGENOM" id="CLU_003291_4_4_6"/>
<dbReference type="UniPathway" id="UPA00638"/>
<dbReference type="Proteomes" id="UP000007011">
    <property type="component" value="Chromosome"/>
</dbReference>
<dbReference type="GO" id="GO:0005737">
    <property type="term" value="C:cytoplasm"/>
    <property type="evidence" value="ECO:0007669"/>
    <property type="project" value="UniProtKB-SubCell"/>
</dbReference>
<dbReference type="GO" id="GO:0016731">
    <property type="term" value="F:oxidoreductase activity, acting on iron-sulfur proteins as donors, NAD or NADP as acceptor"/>
    <property type="evidence" value="ECO:0007669"/>
    <property type="project" value="UniProtKB-UniRule"/>
</dbReference>
<dbReference type="FunFam" id="3.30.390.120:FF:000001">
    <property type="entry name" value="Nitric oxide reductase FlRd-NAD(+) reductase"/>
    <property type="match status" value="1"/>
</dbReference>
<dbReference type="FunFam" id="3.50.50.60:FF:000075">
    <property type="entry name" value="Nitric oxide reductase FlRd-NAD(+) reductase"/>
    <property type="match status" value="1"/>
</dbReference>
<dbReference type="Gene3D" id="3.30.390.120">
    <property type="match status" value="1"/>
</dbReference>
<dbReference type="Gene3D" id="3.50.50.60">
    <property type="entry name" value="FAD/NAD(P)-binding domain"/>
    <property type="match status" value="2"/>
</dbReference>
<dbReference type="HAMAP" id="MF_01313">
    <property type="entry name" value="NorW"/>
    <property type="match status" value="1"/>
</dbReference>
<dbReference type="InterPro" id="IPR050260">
    <property type="entry name" value="FAD-bd_OxRdtase"/>
</dbReference>
<dbReference type="InterPro" id="IPR036188">
    <property type="entry name" value="FAD/NAD-bd_sf"/>
</dbReference>
<dbReference type="InterPro" id="IPR023753">
    <property type="entry name" value="FAD/NAD-binding_dom"/>
</dbReference>
<dbReference type="InterPro" id="IPR023961">
    <property type="entry name" value="NO_rdtase_NorW"/>
</dbReference>
<dbReference type="InterPro" id="IPR041364">
    <property type="entry name" value="Rbx-bd"/>
</dbReference>
<dbReference type="NCBIfam" id="NF003437">
    <property type="entry name" value="PRK04965.1"/>
    <property type="match status" value="1"/>
</dbReference>
<dbReference type="PANTHER" id="PTHR43429:SF3">
    <property type="entry name" value="NITRITE REDUCTASE [NAD(P)H]"/>
    <property type="match status" value="1"/>
</dbReference>
<dbReference type="PANTHER" id="PTHR43429">
    <property type="entry name" value="PYRIDINE NUCLEOTIDE-DISULFIDE OXIDOREDUCTASE DOMAIN-CONTAINING"/>
    <property type="match status" value="1"/>
</dbReference>
<dbReference type="Pfam" id="PF07992">
    <property type="entry name" value="Pyr_redox_2"/>
    <property type="match status" value="1"/>
</dbReference>
<dbReference type="Pfam" id="PF18113">
    <property type="entry name" value="Rbx_binding"/>
    <property type="match status" value="1"/>
</dbReference>
<dbReference type="PRINTS" id="PR00368">
    <property type="entry name" value="FADPNR"/>
</dbReference>
<dbReference type="PRINTS" id="PR00411">
    <property type="entry name" value="PNDRDTASEI"/>
</dbReference>
<dbReference type="SUPFAM" id="SSF51905">
    <property type="entry name" value="FAD/NAD(P)-binding domain"/>
    <property type="match status" value="1"/>
</dbReference>
<sequence length="377" mass="41334">MSNSIVIIGSGFAARQLVKNIRKQDASIPLTLIAADSMDEYNKPDLSHVISQGQRADDLTRQTAGEFAEQFNLRLFPHTWVTDIDAEAHVVKSQNNQWQYDKLVLATGASAFVPPVPGRELMLTLNSQQEYRACETQLRDARRVLIVGGGLIGSELAMDFCRAGKAVTLIDNAASILASLMPPEVSSRLQHRLTEMGVHLLLKSQLQGLEKTDSGILATLECQRCIEVDAVIAATGLRPETALARRAGLTINRGVCVDSYLQTSNADIYALGDCAEINGQVLPFLQPIQLSAMVLAKNLLGNNTPLKLPAMLVKIKTPELPLHLAGETQRQDLRWQINTERQGMVARGVDDADQLRAFVVSEDRMKEAFGLLKTLPM</sequence>
<organism>
    <name type="scientific">Escherichia coli (strain SMS-3-5 / SECEC)</name>
    <dbReference type="NCBI Taxonomy" id="439855"/>
    <lineage>
        <taxon>Bacteria</taxon>
        <taxon>Pseudomonadati</taxon>
        <taxon>Pseudomonadota</taxon>
        <taxon>Gammaproteobacteria</taxon>
        <taxon>Enterobacterales</taxon>
        <taxon>Enterobacteriaceae</taxon>
        <taxon>Escherichia</taxon>
    </lineage>
</organism>
<comment type="function">
    <text evidence="1">One of at least two accessory proteins for anaerobic nitric oxide (NO) reductase. Reduces the rubredoxin moiety of NO reductase.</text>
</comment>
<comment type="catalytic activity">
    <reaction evidence="1">
        <text>2 reduced [nitric oxide reductase rubredoxin domain] + NAD(+) + H(+) = 2 oxidized [nitric oxide reductase rubredoxin domain] + NADH</text>
        <dbReference type="Rhea" id="RHEA:42960"/>
        <dbReference type="Rhea" id="RHEA-COMP:10304"/>
        <dbReference type="Rhea" id="RHEA-COMP:10305"/>
        <dbReference type="ChEBI" id="CHEBI:15378"/>
        <dbReference type="ChEBI" id="CHEBI:29033"/>
        <dbReference type="ChEBI" id="CHEBI:29034"/>
        <dbReference type="ChEBI" id="CHEBI:57540"/>
        <dbReference type="ChEBI" id="CHEBI:57945"/>
    </reaction>
</comment>
<comment type="cofactor">
    <cofactor evidence="1">
        <name>FAD</name>
        <dbReference type="ChEBI" id="CHEBI:57692"/>
    </cofactor>
</comment>
<comment type="pathway">
    <text evidence="1">Nitrogen metabolism; nitric oxide reduction.</text>
</comment>
<comment type="subcellular location">
    <subcellularLocation>
        <location evidence="1">Cytoplasm</location>
    </subcellularLocation>
</comment>
<comment type="similarity">
    <text evidence="1">Belongs to the FAD-dependent oxidoreductase family.</text>
</comment>
<accession>B1LQ29</accession>
<keyword id="KW-0963">Cytoplasm</keyword>
<keyword id="KW-0274">FAD</keyword>
<keyword id="KW-0285">Flavoprotein</keyword>
<keyword id="KW-0520">NAD</keyword>
<keyword id="KW-0560">Oxidoreductase</keyword>